<protein>
    <recommendedName>
        <fullName>Uncharacterized membrane protein C70.04c</fullName>
    </recommendedName>
</protein>
<keyword id="KW-0472">Membrane</keyword>
<keyword id="KW-0539">Nucleus</keyword>
<keyword id="KW-1185">Reference proteome</keyword>
<keyword id="KW-0812">Transmembrane</keyword>
<keyword id="KW-1133">Transmembrane helix</keyword>
<feature type="chain" id="PRO_0000304043" description="Uncharacterized membrane protein C70.04c">
    <location>
        <begin position="1"/>
        <end position="244"/>
    </location>
</feature>
<feature type="transmembrane region" description="Helical" evidence="1">
    <location>
        <begin position="96"/>
        <end position="116"/>
    </location>
</feature>
<feature type="transmembrane region" description="Helical" evidence="1">
    <location>
        <begin position="128"/>
        <end position="148"/>
    </location>
</feature>
<feature type="transmembrane region" description="Helical" evidence="1">
    <location>
        <begin position="171"/>
        <end position="191"/>
    </location>
</feature>
<feature type="transmembrane region" description="Helical" evidence="1">
    <location>
        <begin position="194"/>
        <end position="214"/>
    </location>
</feature>
<feature type="region of interest" description="Disordered" evidence="2">
    <location>
        <begin position="30"/>
        <end position="49"/>
    </location>
</feature>
<feature type="region of interest" description="Disordered" evidence="2">
    <location>
        <begin position="224"/>
        <end position="244"/>
    </location>
</feature>
<feature type="compositionally biased region" description="Polar residues" evidence="2">
    <location>
        <begin position="35"/>
        <end position="49"/>
    </location>
</feature>
<feature type="compositionally biased region" description="Polar residues" evidence="2">
    <location>
        <begin position="235"/>
        <end position="244"/>
    </location>
</feature>
<proteinExistence type="predicted"/>
<dbReference type="EMBL" id="CU329672">
    <property type="protein sequence ID" value="CAA19354.1"/>
    <property type="molecule type" value="Genomic_DNA"/>
</dbReference>
<dbReference type="PIR" id="T41550">
    <property type="entry name" value="T41550"/>
</dbReference>
<dbReference type="RefSeq" id="NP_588538.1">
    <property type="nucleotide sequence ID" value="NM_001023526.2"/>
</dbReference>
<dbReference type="BioGRID" id="275630">
    <property type="interactions" value="4"/>
</dbReference>
<dbReference type="STRING" id="284812.O74525"/>
<dbReference type="PaxDb" id="4896-SPCC70.04c.1"/>
<dbReference type="EnsemblFungi" id="SPCC70.04c.1">
    <property type="protein sequence ID" value="SPCC70.04c.1:pep"/>
    <property type="gene ID" value="SPCC70.04c"/>
</dbReference>
<dbReference type="KEGG" id="spo:2539057"/>
<dbReference type="PomBase" id="SPCC70.04c"/>
<dbReference type="VEuPathDB" id="FungiDB:SPCC70.04c"/>
<dbReference type="HOGENOM" id="CLU_1138570_0_0_1"/>
<dbReference type="InParanoid" id="O74525"/>
<dbReference type="PRO" id="PR:O74525"/>
<dbReference type="Proteomes" id="UP000002485">
    <property type="component" value="Chromosome III"/>
</dbReference>
<dbReference type="GO" id="GO:0005635">
    <property type="term" value="C:nuclear envelope"/>
    <property type="evidence" value="ECO:0007005"/>
    <property type="project" value="PomBase"/>
</dbReference>
<dbReference type="GO" id="GO:0031965">
    <property type="term" value="C:nuclear membrane"/>
    <property type="evidence" value="ECO:0007669"/>
    <property type="project" value="UniProtKB-SubCell"/>
</dbReference>
<evidence type="ECO:0000255" key="1"/>
<evidence type="ECO:0000256" key="2">
    <source>
        <dbReference type="SAM" id="MobiDB-lite"/>
    </source>
</evidence>
<evidence type="ECO:0000305" key="3"/>
<gene>
    <name type="ORF">SPCC70.04c</name>
</gene>
<comment type="subcellular location">
    <subcellularLocation>
        <location evidence="3">Nucleus membrane</location>
        <topology evidence="3">Multi-pass membrane protein</topology>
    </subcellularLocation>
</comment>
<sequence length="244" mass="27870">MKQNNKKPLPSKTKEISLETDWIDVIETMRETNESPKSQNPSEEATTVNELSCEAKPKLLFTPTKSSLSIGNFPYKEFDPVLKFPGIHYTYSRERLWGTCVILSTLFWSYYVLSNSELLEFEASEYSLLFILIIALDALLTVSLFGLFHHLMFLTTNYSYTINSTLDISKGFFINVLSTMVQALVTVTIAFTKFVTIDFPIYVFSSLFLYHPLSRSRQLPTKMQLDGSGERKTDSSLVHQNPPN</sequence>
<accession>O74525</accession>
<name>YJ44_SCHPO</name>
<reference key="1">
    <citation type="journal article" date="2002" name="Nature">
        <title>The genome sequence of Schizosaccharomyces pombe.</title>
        <authorList>
            <person name="Wood V."/>
            <person name="Gwilliam R."/>
            <person name="Rajandream M.A."/>
            <person name="Lyne M.H."/>
            <person name="Lyne R."/>
            <person name="Stewart A."/>
            <person name="Sgouros J.G."/>
            <person name="Peat N."/>
            <person name="Hayles J."/>
            <person name="Baker S.G."/>
            <person name="Basham D."/>
            <person name="Bowman S."/>
            <person name="Brooks K."/>
            <person name="Brown D."/>
            <person name="Brown S."/>
            <person name="Chillingworth T."/>
            <person name="Churcher C.M."/>
            <person name="Collins M."/>
            <person name="Connor R."/>
            <person name="Cronin A."/>
            <person name="Davis P."/>
            <person name="Feltwell T."/>
            <person name="Fraser A."/>
            <person name="Gentles S."/>
            <person name="Goble A."/>
            <person name="Hamlin N."/>
            <person name="Harris D.E."/>
            <person name="Hidalgo J."/>
            <person name="Hodgson G."/>
            <person name="Holroyd S."/>
            <person name="Hornsby T."/>
            <person name="Howarth S."/>
            <person name="Huckle E.J."/>
            <person name="Hunt S."/>
            <person name="Jagels K."/>
            <person name="James K.D."/>
            <person name="Jones L."/>
            <person name="Jones M."/>
            <person name="Leather S."/>
            <person name="McDonald S."/>
            <person name="McLean J."/>
            <person name="Mooney P."/>
            <person name="Moule S."/>
            <person name="Mungall K.L."/>
            <person name="Murphy L.D."/>
            <person name="Niblett D."/>
            <person name="Odell C."/>
            <person name="Oliver K."/>
            <person name="O'Neil S."/>
            <person name="Pearson D."/>
            <person name="Quail M.A."/>
            <person name="Rabbinowitsch E."/>
            <person name="Rutherford K.M."/>
            <person name="Rutter S."/>
            <person name="Saunders D."/>
            <person name="Seeger K."/>
            <person name="Sharp S."/>
            <person name="Skelton J."/>
            <person name="Simmonds M.N."/>
            <person name="Squares R."/>
            <person name="Squares S."/>
            <person name="Stevens K."/>
            <person name="Taylor K."/>
            <person name="Taylor R.G."/>
            <person name="Tivey A."/>
            <person name="Walsh S.V."/>
            <person name="Warren T."/>
            <person name="Whitehead S."/>
            <person name="Woodward J.R."/>
            <person name="Volckaert G."/>
            <person name="Aert R."/>
            <person name="Robben J."/>
            <person name="Grymonprez B."/>
            <person name="Weltjens I."/>
            <person name="Vanstreels E."/>
            <person name="Rieger M."/>
            <person name="Schaefer M."/>
            <person name="Mueller-Auer S."/>
            <person name="Gabel C."/>
            <person name="Fuchs M."/>
            <person name="Duesterhoeft A."/>
            <person name="Fritzc C."/>
            <person name="Holzer E."/>
            <person name="Moestl D."/>
            <person name="Hilbert H."/>
            <person name="Borzym K."/>
            <person name="Langer I."/>
            <person name="Beck A."/>
            <person name="Lehrach H."/>
            <person name="Reinhardt R."/>
            <person name="Pohl T.M."/>
            <person name="Eger P."/>
            <person name="Zimmermann W."/>
            <person name="Wedler H."/>
            <person name="Wambutt R."/>
            <person name="Purnelle B."/>
            <person name="Goffeau A."/>
            <person name="Cadieu E."/>
            <person name="Dreano S."/>
            <person name="Gloux S."/>
            <person name="Lelaure V."/>
            <person name="Mottier S."/>
            <person name="Galibert F."/>
            <person name="Aves S.J."/>
            <person name="Xiang Z."/>
            <person name="Hunt C."/>
            <person name="Moore K."/>
            <person name="Hurst S.M."/>
            <person name="Lucas M."/>
            <person name="Rochet M."/>
            <person name="Gaillardin C."/>
            <person name="Tallada V.A."/>
            <person name="Garzon A."/>
            <person name="Thode G."/>
            <person name="Daga R.R."/>
            <person name="Cruzado L."/>
            <person name="Jimenez J."/>
            <person name="Sanchez M."/>
            <person name="del Rey F."/>
            <person name="Benito J."/>
            <person name="Dominguez A."/>
            <person name="Revuelta J.L."/>
            <person name="Moreno S."/>
            <person name="Armstrong J."/>
            <person name="Forsburg S.L."/>
            <person name="Cerutti L."/>
            <person name="Lowe T."/>
            <person name="McCombie W.R."/>
            <person name="Paulsen I."/>
            <person name="Potashkin J."/>
            <person name="Shpakovski G.V."/>
            <person name="Ussery D."/>
            <person name="Barrell B.G."/>
            <person name="Nurse P."/>
        </authorList>
    </citation>
    <scope>NUCLEOTIDE SEQUENCE [LARGE SCALE GENOMIC DNA]</scope>
    <source>
        <strain>972 / ATCC 24843</strain>
    </source>
</reference>
<reference key="2">
    <citation type="journal article" date="2006" name="Nat. Biotechnol.">
        <title>ORFeome cloning and global analysis of protein localization in the fission yeast Schizosaccharomyces pombe.</title>
        <authorList>
            <person name="Matsuyama A."/>
            <person name="Arai R."/>
            <person name="Yashiroda Y."/>
            <person name="Shirai A."/>
            <person name="Kamata A."/>
            <person name="Sekido S."/>
            <person name="Kobayashi Y."/>
            <person name="Hashimoto A."/>
            <person name="Hamamoto M."/>
            <person name="Hiraoka Y."/>
            <person name="Horinouchi S."/>
            <person name="Yoshida M."/>
        </authorList>
    </citation>
    <scope>SUBCELLULAR LOCATION [LARGE SCALE ANALYSIS]</scope>
</reference>
<organism>
    <name type="scientific">Schizosaccharomyces pombe (strain 972 / ATCC 24843)</name>
    <name type="common">Fission yeast</name>
    <dbReference type="NCBI Taxonomy" id="284812"/>
    <lineage>
        <taxon>Eukaryota</taxon>
        <taxon>Fungi</taxon>
        <taxon>Dikarya</taxon>
        <taxon>Ascomycota</taxon>
        <taxon>Taphrinomycotina</taxon>
        <taxon>Schizosaccharomycetes</taxon>
        <taxon>Schizosaccharomycetales</taxon>
        <taxon>Schizosaccharomycetaceae</taxon>
        <taxon>Schizosaccharomyces</taxon>
    </lineage>
</organism>